<accession>B5EFQ7</accession>
<comment type="function">
    <text evidence="1">Binds 23S rRNA and is also seen to make contacts with the A and possibly P site tRNAs.</text>
</comment>
<comment type="subunit">
    <text evidence="1">Part of the 50S ribosomal subunit.</text>
</comment>
<comment type="similarity">
    <text evidence="1">Belongs to the universal ribosomal protein uL16 family.</text>
</comment>
<gene>
    <name evidence="1" type="primary">rplP</name>
    <name type="ordered locus">Gbem_0940</name>
</gene>
<dbReference type="EMBL" id="CP001124">
    <property type="protein sequence ID" value="ACH37961.1"/>
    <property type="molecule type" value="Genomic_DNA"/>
</dbReference>
<dbReference type="RefSeq" id="WP_012529373.1">
    <property type="nucleotide sequence ID" value="NC_011146.1"/>
</dbReference>
<dbReference type="SMR" id="B5EFQ7"/>
<dbReference type="STRING" id="404380.Gbem_0940"/>
<dbReference type="KEGG" id="gbm:Gbem_0940"/>
<dbReference type="eggNOG" id="COG0197">
    <property type="taxonomic scope" value="Bacteria"/>
</dbReference>
<dbReference type="HOGENOM" id="CLU_078858_2_1_7"/>
<dbReference type="OrthoDB" id="9802589at2"/>
<dbReference type="Proteomes" id="UP000008825">
    <property type="component" value="Chromosome"/>
</dbReference>
<dbReference type="GO" id="GO:0022625">
    <property type="term" value="C:cytosolic large ribosomal subunit"/>
    <property type="evidence" value="ECO:0007669"/>
    <property type="project" value="TreeGrafter"/>
</dbReference>
<dbReference type="GO" id="GO:0019843">
    <property type="term" value="F:rRNA binding"/>
    <property type="evidence" value="ECO:0007669"/>
    <property type="project" value="UniProtKB-UniRule"/>
</dbReference>
<dbReference type="GO" id="GO:0003735">
    <property type="term" value="F:structural constituent of ribosome"/>
    <property type="evidence" value="ECO:0007669"/>
    <property type="project" value="InterPro"/>
</dbReference>
<dbReference type="GO" id="GO:0000049">
    <property type="term" value="F:tRNA binding"/>
    <property type="evidence" value="ECO:0007669"/>
    <property type="project" value="UniProtKB-KW"/>
</dbReference>
<dbReference type="GO" id="GO:0006412">
    <property type="term" value="P:translation"/>
    <property type="evidence" value="ECO:0007669"/>
    <property type="project" value="UniProtKB-UniRule"/>
</dbReference>
<dbReference type="CDD" id="cd01433">
    <property type="entry name" value="Ribosomal_L16_L10e"/>
    <property type="match status" value="1"/>
</dbReference>
<dbReference type="FunFam" id="3.90.1170.10:FF:000001">
    <property type="entry name" value="50S ribosomal protein L16"/>
    <property type="match status" value="1"/>
</dbReference>
<dbReference type="Gene3D" id="3.90.1170.10">
    <property type="entry name" value="Ribosomal protein L10e/L16"/>
    <property type="match status" value="1"/>
</dbReference>
<dbReference type="HAMAP" id="MF_01342">
    <property type="entry name" value="Ribosomal_uL16"/>
    <property type="match status" value="1"/>
</dbReference>
<dbReference type="InterPro" id="IPR047873">
    <property type="entry name" value="Ribosomal_uL16"/>
</dbReference>
<dbReference type="InterPro" id="IPR000114">
    <property type="entry name" value="Ribosomal_uL16_bact-type"/>
</dbReference>
<dbReference type="InterPro" id="IPR020798">
    <property type="entry name" value="Ribosomal_uL16_CS"/>
</dbReference>
<dbReference type="InterPro" id="IPR016180">
    <property type="entry name" value="Ribosomal_uL16_dom"/>
</dbReference>
<dbReference type="InterPro" id="IPR036920">
    <property type="entry name" value="Ribosomal_uL16_sf"/>
</dbReference>
<dbReference type="NCBIfam" id="TIGR01164">
    <property type="entry name" value="rplP_bact"/>
    <property type="match status" value="1"/>
</dbReference>
<dbReference type="PANTHER" id="PTHR12220">
    <property type="entry name" value="50S/60S RIBOSOMAL PROTEIN L16"/>
    <property type="match status" value="1"/>
</dbReference>
<dbReference type="PANTHER" id="PTHR12220:SF13">
    <property type="entry name" value="LARGE RIBOSOMAL SUBUNIT PROTEIN UL16M"/>
    <property type="match status" value="1"/>
</dbReference>
<dbReference type="Pfam" id="PF00252">
    <property type="entry name" value="Ribosomal_L16"/>
    <property type="match status" value="1"/>
</dbReference>
<dbReference type="PRINTS" id="PR00060">
    <property type="entry name" value="RIBOSOMALL16"/>
</dbReference>
<dbReference type="SUPFAM" id="SSF54686">
    <property type="entry name" value="Ribosomal protein L16p/L10e"/>
    <property type="match status" value="1"/>
</dbReference>
<dbReference type="PROSITE" id="PS00586">
    <property type="entry name" value="RIBOSOMAL_L16_1"/>
    <property type="match status" value="1"/>
</dbReference>
<dbReference type="PROSITE" id="PS00701">
    <property type="entry name" value="RIBOSOMAL_L16_2"/>
    <property type="match status" value="1"/>
</dbReference>
<protein>
    <recommendedName>
        <fullName evidence="1">Large ribosomal subunit protein uL16</fullName>
    </recommendedName>
    <alternativeName>
        <fullName evidence="2">50S ribosomal protein L16</fullName>
    </alternativeName>
</protein>
<evidence type="ECO:0000255" key="1">
    <source>
        <dbReference type="HAMAP-Rule" id="MF_01342"/>
    </source>
</evidence>
<evidence type="ECO:0000305" key="2"/>
<sequence>MLMPKKVKYRKQMKGRMTGTPQRGVELAFGDFGLQATECGWLDSRQIEAARIAMTRYIKRGGKIWIRIFPDKPLTSKPAETRMGKGKGSPDSWVCVIKPGRILYEMEGVTEEVAREAFRLAAHKLPVASKFITRTEINEG</sequence>
<feature type="chain" id="PRO_1000142977" description="Large ribosomal subunit protein uL16">
    <location>
        <begin position="1"/>
        <end position="140"/>
    </location>
</feature>
<keyword id="KW-1185">Reference proteome</keyword>
<keyword id="KW-0687">Ribonucleoprotein</keyword>
<keyword id="KW-0689">Ribosomal protein</keyword>
<keyword id="KW-0694">RNA-binding</keyword>
<keyword id="KW-0699">rRNA-binding</keyword>
<keyword id="KW-0820">tRNA-binding</keyword>
<name>RL16_CITBB</name>
<proteinExistence type="inferred from homology"/>
<organism>
    <name type="scientific">Citrifermentans bemidjiense (strain ATCC BAA-1014 / DSM 16622 / JCM 12645 / Bem)</name>
    <name type="common">Geobacter bemidjiensis</name>
    <dbReference type="NCBI Taxonomy" id="404380"/>
    <lineage>
        <taxon>Bacteria</taxon>
        <taxon>Pseudomonadati</taxon>
        <taxon>Thermodesulfobacteriota</taxon>
        <taxon>Desulfuromonadia</taxon>
        <taxon>Geobacterales</taxon>
        <taxon>Geobacteraceae</taxon>
        <taxon>Citrifermentans</taxon>
    </lineage>
</organism>
<reference key="1">
    <citation type="submission" date="2008-07" db="EMBL/GenBank/DDBJ databases">
        <title>Complete sequence of Geobacter bemidjiensis BEM.</title>
        <authorList>
            <consortium name="US DOE Joint Genome Institute"/>
            <person name="Lucas S."/>
            <person name="Copeland A."/>
            <person name="Lapidus A."/>
            <person name="Glavina del Rio T."/>
            <person name="Dalin E."/>
            <person name="Tice H."/>
            <person name="Bruce D."/>
            <person name="Goodwin L."/>
            <person name="Pitluck S."/>
            <person name="Kiss H."/>
            <person name="Brettin T."/>
            <person name="Detter J.C."/>
            <person name="Han C."/>
            <person name="Kuske C.R."/>
            <person name="Schmutz J."/>
            <person name="Larimer F."/>
            <person name="Land M."/>
            <person name="Hauser L."/>
            <person name="Kyrpides N."/>
            <person name="Lykidis A."/>
            <person name="Lovley D."/>
            <person name="Richardson P."/>
        </authorList>
    </citation>
    <scope>NUCLEOTIDE SEQUENCE [LARGE SCALE GENOMIC DNA]</scope>
    <source>
        <strain>ATCC BAA-1014 / DSM 16622 / JCM 12645 / Bem</strain>
    </source>
</reference>